<reference key="1">
    <citation type="journal article" date="2009" name="BMC Genomics">
        <title>Metabolic analysis of the soil microbe Dechloromonas aromatica str. RCB: indications of a surprisingly complex life-style and cryptic anaerobic pathways for aromatic degradation.</title>
        <authorList>
            <person name="Salinero K.K."/>
            <person name="Keller K."/>
            <person name="Feil W.S."/>
            <person name="Feil H."/>
            <person name="Trong S."/>
            <person name="Di Bartolo G."/>
            <person name="Lapidus A."/>
        </authorList>
    </citation>
    <scope>NUCLEOTIDE SEQUENCE [LARGE SCALE GENOMIC DNA]</scope>
    <source>
        <strain>RCB</strain>
    </source>
</reference>
<accession>Q479T3</accession>
<protein>
    <recommendedName>
        <fullName evidence="1">Oxygen-dependent coproporphyrinogen-III oxidase</fullName>
        <shortName evidence="1">CPO</shortName>
        <shortName evidence="1">Coprogen oxidase</shortName>
        <shortName evidence="1">Coproporphyrinogenase</shortName>
        <ecNumber evidence="1">1.3.3.3</ecNumber>
    </recommendedName>
</protein>
<comment type="function">
    <text evidence="1">Involved in the heme biosynthesis. Catalyzes the aerobic oxidative decarboxylation of propionate groups of rings A and B of coproporphyrinogen-III to yield the vinyl groups in protoporphyrinogen-IX.</text>
</comment>
<comment type="catalytic activity">
    <reaction evidence="1">
        <text>coproporphyrinogen III + O2 + 2 H(+) = protoporphyrinogen IX + 2 CO2 + 2 H2O</text>
        <dbReference type="Rhea" id="RHEA:18257"/>
        <dbReference type="ChEBI" id="CHEBI:15377"/>
        <dbReference type="ChEBI" id="CHEBI:15378"/>
        <dbReference type="ChEBI" id="CHEBI:15379"/>
        <dbReference type="ChEBI" id="CHEBI:16526"/>
        <dbReference type="ChEBI" id="CHEBI:57307"/>
        <dbReference type="ChEBI" id="CHEBI:57309"/>
        <dbReference type="EC" id="1.3.3.3"/>
    </reaction>
</comment>
<comment type="cofactor">
    <cofactor evidence="1">
        <name>a divalent metal cation</name>
        <dbReference type="ChEBI" id="CHEBI:60240"/>
    </cofactor>
</comment>
<comment type="pathway">
    <text evidence="1">Porphyrin-containing compound metabolism; protoporphyrin-IX biosynthesis; protoporphyrinogen-IX from coproporphyrinogen-III (O2 route): step 1/1.</text>
</comment>
<comment type="subunit">
    <text evidence="1">Homodimer.</text>
</comment>
<comment type="subcellular location">
    <subcellularLocation>
        <location evidence="1">Cytoplasm</location>
    </subcellularLocation>
</comment>
<comment type="similarity">
    <text evidence="1">Belongs to the aerobic coproporphyrinogen-III oxidase family.</text>
</comment>
<evidence type="ECO:0000255" key="1">
    <source>
        <dbReference type="HAMAP-Rule" id="MF_00333"/>
    </source>
</evidence>
<name>HEM6_DECAR</name>
<gene>
    <name evidence="1" type="primary">hemF</name>
    <name type="ordered locus">Daro_3669</name>
</gene>
<dbReference type="EC" id="1.3.3.3" evidence="1"/>
<dbReference type="EMBL" id="CP000089">
    <property type="protein sequence ID" value="AAZ48398.1"/>
    <property type="molecule type" value="Genomic_DNA"/>
</dbReference>
<dbReference type="SMR" id="Q479T3"/>
<dbReference type="STRING" id="159087.Daro_3669"/>
<dbReference type="KEGG" id="dar:Daro_3669"/>
<dbReference type="eggNOG" id="COG0408">
    <property type="taxonomic scope" value="Bacteria"/>
</dbReference>
<dbReference type="HOGENOM" id="CLU_026169_0_1_4"/>
<dbReference type="OrthoDB" id="9777553at2"/>
<dbReference type="UniPathway" id="UPA00251">
    <property type="reaction ID" value="UER00322"/>
</dbReference>
<dbReference type="GO" id="GO:0005737">
    <property type="term" value="C:cytoplasm"/>
    <property type="evidence" value="ECO:0007669"/>
    <property type="project" value="UniProtKB-SubCell"/>
</dbReference>
<dbReference type="GO" id="GO:0004109">
    <property type="term" value="F:coproporphyrinogen oxidase activity"/>
    <property type="evidence" value="ECO:0007669"/>
    <property type="project" value="UniProtKB-UniRule"/>
</dbReference>
<dbReference type="GO" id="GO:0046872">
    <property type="term" value="F:metal ion binding"/>
    <property type="evidence" value="ECO:0007669"/>
    <property type="project" value="UniProtKB-KW"/>
</dbReference>
<dbReference type="GO" id="GO:0042803">
    <property type="term" value="F:protein homodimerization activity"/>
    <property type="evidence" value="ECO:0000250"/>
    <property type="project" value="UniProtKB"/>
</dbReference>
<dbReference type="GO" id="GO:0006782">
    <property type="term" value="P:protoporphyrinogen IX biosynthetic process"/>
    <property type="evidence" value="ECO:0007669"/>
    <property type="project" value="UniProtKB-UniRule"/>
</dbReference>
<dbReference type="FunFam" id="3.40.1500.10:FF:000001">
    <property type="entry name" value="Oxygen-dependent coproporphyrinogen-III oxidase"/>
    <property type="match status" value="1"/>
</dbReference>
<dbReference type="Gene3D" id="3.40.1500.10">
    <property type="entry name" value="Coproporphyrinogen III oxidase, aerobic"/>
    <property type="match status" value="1"/>
</dbReference>
<dbReference type="HAMAP" id="MF_00333">
    <property type="entry name" value="Coprogen_oxidas"/>
    <property type="match status" value="1"/>
</dbReference>
<dbReference type="InterPro" id="IPR001260">
    <property type="entry name" value="Coprogen_oxidase_aer"/>
</dbReference>
<dbReference type="InterPro" id="IPR036406">
    <property type="entry name" value="Coprogen_oxidase_aer_sf"/>
</dbReference>
<dbReference type="InterPro" id="IPR018375">
    <property type="entry name" value="Coprogen_oxidase_CS"/>
</dbReference>
<dbReference type="NCBIfam" id="NF003727">
    <property type="entry name" value="PRK05330.1"/>
    <property type="match status" value="1"/>
</dbReference>
<dbReference type="PANTHER" id="PTHR10755">
    <property type="entry name" value="COPROPORPHYRINOGEN III OXIDASE, MITOCHONDRIAL"/>
    <property type="match status" value="1"/>
</dbReference>
<dbReference type="PANTHER" id="PTHR10755:SF0">
    <property type="entry name" value="OXYGEN-DEPENDENT COPROPORPHYRINOGEN-III OXIDASE, MITOCHONDRIAL"/>
    <property type="match status" value="1"/>
</dbReference>
<dbReference type="Pfam" id="PF01218">
    <property type="entry name" value="Coprogen_oxidas"/>
    <property type="match status" value="1"/>
</dbReference>
<dbReference type="PIRSF" id="PIRSF000166">
    <property type="entry name" value="Coproporphyri_ox"/>
    <property type="match status" value="1"/>
</dbReference>
<dbReference type="PRINTS" id="PR00073">
    <property type="entry name" value="COPRGNOXDASE"/>
</dbReference>
<dbReference type="SUPFAM" id="SSF102886">
    <property type="entry name" value="Coproporphyrinogen III oxidase"/>
    <property type="match status" value="1"/>
</dbReference>
<dbReference type="PROSITE" id="PS01021">
    <property type="entry name" value="COPROGEN_OXIDASE"/>
    <property type="match status" value="1"/>
</dbReference>
<keyword id="KW-0963">Cytoplasm</keyword>
<keyword id="KW-0350">Heme biosynthesis</keyword>
<keyword id="KW-0479">Metal-binding</keyword>
<keyword id="KW-0560">Oxidoreductase</keyword>
<keyword id="KW-0627">Porphyrin biosynthesis</keyword>
<proteinExistence type="inferred from homology"/>
<organism>
    <name type="scientific">Dechloromonas aromatica (strain RCB)</name>
    <dbReference type="NCBI Taxonomy" id="159087"/>
    <lineage>
        <taxon>Bacteria</taxon>
        <taxon>Pseudomonadati</taxon>
        <taxon>Pseudomonadota</taxon>
        <taxon>Betaproteobacteria</taxon>
        <taxon>Rhodocyclales</taxon>
        <taxon>Azonexaceae</taxon>
        <taxon>Dechloromonas</taxon>
    </lineage>
</organism>
<sequence length="298" mass="34231">MDTTRLKDFFTGLQSRIVAELEAFDGQPFRTDSWVRPEGGGGISRLIEEGDFFERGGVNFSHVTGKSLPASATAVRPQLAGRSWEAMGVSLVLHPRNPYCPTAHMNVRCFVASKEGEEDVWWFGGGMDMTPYYGQREDVVHFHQTCKDALAPFGDEVYPKYKHWCDEYFFLKHRNEPRGVGGVFFDDLNEGGFERCFELTQAVGNAFTKAYLPVLAKRREMPYDERERDFQAYRRGRYVEFNLVWDRGTLFGLQSGGRTESILMSLPPIVKWRYDWQPEAGSPEAELYEVFLKPQDWA</sequence>
<feature type="chain" id="PRO_1000019467" description="Oxygen-dependent coproporphyrinogen-III oxidase">
    <location>
        <begin position="1"/>
        <end position="298"/>
    </location>
</feature>
<feature type="region of interest" description="Important for dimerization" evidence="1">
    <location>
        <begin position="238"/>
        <end position="273"/>
    </location>
</feature>
<feature type="active site" description="Proton donor" evidence="1">
    <location>
        <position position="104"/>
    </location>
</feature>
<feature type="binding site" evidence="1">
    <location>
        <position position="90"/>
    </location>
    <ligand>
        <name>substrate</name>
    </ligand>
</feature>
<feature type="binding site" evidence="1">
    <location>
        <position position="94"/>
    </location>
    <ligand>
        <name>a divalent metal cation</name>
        <dbReference type="ChEBI" id="CHEBI:60240"/>
    </ligand>
</feature>
<feature type="binding site" evidence="1">
    <location>
        <position position="104"/>
    </location>
    <ligand>
        <name>a divalent metal cation</name>
        <dbReference type="ChEBI" id="CHEBI:60240"/>
    </ligand>
</feature>
<feature type="binding site" evidence="1">
    <location>
        <begin position="106"/>
        <end position="108"/>
    </location>
    <ligand>
        <name>substrate</name>
    </ligand>
</feature>
<feature type="binding site" evidence="1">
    <location>
        <position position="143"/>
    </location>
    <ligand>
        <name>a divalent metal cation</name>
        <dbReference type="ChEBI" id="CHEBI:60240"/>
    </ligand>
</feature>
<feature type="binding site" evidence="1">
    <location>
        <position position="173"/>
    </location>
    <ligand>
        <name>a divalent metal cation</name>
        <dbReference type="ChEBI" id="CHEBI:60240"/>
    </ligand>
</feature>
<feature type="binding site" evidence="1">
    <location>
        <begin position="256"/>
        <end position="258"/>
    </location>
    <ligand>
        <name>substrate</name>
    </ligand>
</feature>
<feature type="site" description="Important for dimerization" evidence="1">
    <location>
        <position position="173"/>
    </location>
</feature>